<sequence length="427" mass="46050">MKTLTGTTEAILNELRAENSSNSSDQIASEVKAIIENVKNTGDQALFDYTAKFDGVELNELRIPNSDIQIATNKVDPAFLEALKEAKANIESFHNKQKQSAFLDSEKDGVIRGQIIRPLETVGVYVPGGTAAYPSSVLMNVLPAKIAGVKRIVMITPPSENGINPHVLAAANLAGVDEIYQVGGAHGIAALAYGTASIPKVDKIVGPGNVYVATAKREVFGLVDIDMIAGPSEIVVLADETAKPAFIAADLLSQAEHDTLARAILITTSEKIAQQTKIELNKQLENLPRKAIAKEATESHGKIIITKSTAEMFHIMNEIAPEHLEVQLENPMNYLYQIKNAGSIFLGNYASEPLGDYFAGPNHVLPTSGTAKFFSPLGVEDFTKRSAFISYTKEALAKEKDAIVLLASKEGLDAHAKAIQIRFEEEN</sequence>
<gene>
    <name evidence="1" type="primary">hisD</name>
    <name type="ordered locus">lin0576</name>
</gene>
<evidence type="ECO:0000255" key="1">
    <source>
        <dbReference type="HAMAP-Rule" id="MF_01024"/>
    </source>
</evidence>
<protein>
    <recommendedName>
        <fullName evidence="1">Histidinol dehydrogenase</fullName>
        <shortName evidence="1">HDH</shortName>
        <ecNumber evidence="1">1.1.1.23</ecNumber>
    </recommendedName>
</protein>
<organism>
    <name type="scientific">Listeria innocua serovar 6a (strain ATCC BAA-680 / CLIP 11262)</name>
    <dbReference type="NCBI Taxonomy" id="272626"/>
    <lineage>
        <taxon>Bacteria</taxon>
        <taxon>Bacillati</taxon>
        <taxon>Bacillota</taxon>
        <taxon>Bacilli</taxon>
        <taxon>Bacillales</taxon>
        <taxon>Listeriaceae</taxon>
        <taxon>Listeria</taxon>
    </lineage>
</organism>
<name>HISX_LISIN</name>
<feature type="chain" id="PRO_0000135790" description="Histidinol dehydrogenase">
    <location>
        <begin position="1"/>
        <end position="427"/>
    </location>
</feature>
<feature type="active site" description="Proton acceptor" evidence="1">
    <location>
        <position position="322"/>
    </location>
</feature>
<feature type="active site" description="Proton acceptor" evidence="1">
    <location>
        <position position="323"/>
    </location>
</feature>
<feature type="binding site" evidence="1">
    <location>
        <position position="232"/>
    </location>
    <ligand>
        <name>substrate</name>
    </ligand>
</feature>
<feature type="binding site" evidence="1">
    <location>
        <position position="254"/>
    </location>
    <ligand>
        <name>substrate</name>
    </ligand>
</feature>
<feature type="binding site" evidence="1">
    <location>
        <position position="254"/>
    </location>
    <ligand>
        <name>Zn(2+)</name>
        <dbReference type="ChEBI" id="CHEBI:29105"/>
    </ligand>
</feature>
<feature type="binding site" evidence="1">
    <location>
        <position position="257"/>
    </location>
    <ligand>
        <name>substrate</name>
    </ligand>
</feature>
<feature type="binding site" evidence="1">
    <location>
        <position position="257"/>
    </location>
    <ligand>
        <name>Zn(2+)</name>
        <dbReference type="ChEBI" id="CHEBI:29105"/>
    </ligand>
</feature>
<feature type="binding site" evidence="1">
    <location>
        <position position="323"/>
    </location>
    <ligand>
        <name>substrate</name>
    </ligand>
</feature>
<feature type="binding site" evidence="1">
    <location>
        <position position="356"/>
    </location>
    <ligand>
        <name>substrate</name>
    </ligand>
</feature>
<feature type="binding site" evidence="1">
    <location>
        <position position="356"/>
    </location>
    <ligand>
        <name>Zn(2+)</name>
        <dbReference type="ChEBI" id="CHEBI:29105"/>
    </ligand>
</feature>
<feature type="binding site" evidence="1">
    <location>
        <position position="410"/>
    </location>
    <ligand>
        <name>substrate</name>
    </ligand>
</feature>
<feature type="binding site" evidence="1">
    <location>
        <position position="415"/>
    </location>
    <ligand>
        <name>substrate</name>
    </ligand>
</feature>
<feature type="binding site" evidence="1">
    <location>
        <position position="415"/>
    </location>
    <ligand>
        <name>Zn(2+)</name>
        <dbReference type="ChEBI" id="CHEBI:29105"/>
    </ligand>
</feature>
<accession>Q92E84</accession>
<comment type="function">
    <text evidence="1">Catalyzes the sequential NAD-dependent oxidations of L-histidinol to L-histidinaldehyde and then to L-histidine.</text>
</comment>
<comment type="catalytic activity">
    <reaction evidence="1">
        <text>L-histidinol + 2 NAD(+) + H2O = L-histidine + 2 NADH + 3 H(+)</text>
        <dbReference type="Rhea" id="RHEA:20641"/>
        <dbReference type="ChEBI" id="CHEBI:15377"/>
        <dbReference type="ChEBI" id="CHEBI:15378"/>
        <dbReference type="ChEBI" id="CHEBI:57540"/>
        <dbReference type="ChEBI" id="CHEBI:57595"/>
        <dbReference type="ChEBI" id="CHEBI:57699"/>
        <dbReference type="ChEBI" id="CHEBI:57945"/>
        <dbReference type="EC" id="1.1.1.23"/>
    </reaction>
</comment>
<comment type="cofactor">
    <cofactor evidence="1">
        <name>Zn(2+)</name>
        <dbReference type="ChEBI" id="CHEBI:29105"/>
    </cofactor>
    <text evidence="1">Binds 1 zinc ion per subunit.</text>
</comment>
<comment type="pathway">
    <text evidence="1">Amino-acid biosynthesis; L-histidine biosynthesis; L-histidine from 5-phospho-alpha-D-ribose 1-diphosphate: step 9/9.</text>
</comment>
<comment type="similarity">
    <text evidence="1">Belongs to the histidinol dehydrogenase family.</text>
</comment>
<dbReference type="EC" id="1.1.1.23" evidence="1"/>
<dbReference type="EMBL" id="AL596165">
    <property type="protein sequence ID" value="CAC95808.1"/>
    <property type="molecule type" value="Genomic_DNA"/>
</dbReference>
<dbReference type="PIR" id="AH1504">
    <property type="entry name" value="AH1504"/>
</dbReference>
<dbReference type="RefSeq" id="WP_010990495.1">
    <property type="nucleotide sequence ID" value="NC_003212.1"/>
</dbReference>
<dbReference type="SMR" id="Q92E84"/>
<dbReference type="STRING" id="272626.gene:17564902"/>
<dbReference type="KEGG" id="lin:hisD"/>
<dbReference type="eggNOG" id="COG0141">
    <property type="taxonomic scope" value="Bacteria"/>
</dbReference>
<dbReference type="HOGENOM" id="CLU_006732_3_3_9"/>
<dbReference type="OrthoDB" id="9805269at2"/>
<dbReference type="UniPathway" id="UPA00031">
    <property type="reaction ID" value="UER00014"/>
</dbReference>
<dbReference type="Proteomes" id="UP000002513">
    <property type="component" value="Chromosome"/>
</dbReference>
<dbReference type="GO" id="GO:0005829">
    <property type="term" value="C:cytosol"/>
    <property type="evidence" value="ECO:0007669"/>
    <property type="project" value="TreeGrafter"/>
</dbReference>
<dbReference type="GO" id="GO:0004399">
    <property type="term" value="F:histidinol dehydrogenase activity"/>
    <property type="evidence" value="ECO:0007669"/>
    <property type="project" value="UniProtKB-UniRule"/>
</dbReference>
<dbReference type="GO" id="GO:0051287">
    <property type="term" value="F:NAD binding"/>
    <property type="evidence" value="ECO:0007669"/>
    <property type="project" value="InterPro"/>
</dbReference>
<dbReference type="GO" id="GO:0008270">
    <property type="term" value="F:zinc ion binding"/>
    <property type="evidence" value="ECO:0007669"/>
    <property type="project" value="UniProtKB-UniRule"/>
</dbReference>
<dbReference type="GO" id="GO:0000105">
    <property type="term" value="P:L-histidine biosynthetic process"/>
    <property type="evidence" value="ECO:0007669"/>
    <property type="project" value="UniProtKB-UniRule"/>
</dbReference>
<dbReference type="CDD" id="cd06572">
    <property type="entry name" value="Histidinol_dh"/>
    <property type="match status" value="1"/>
</dbReference>
<dbReference type="FunFam" id="3.40.50.1980:FF:000001">
    <property type="entry name" value="Histidinol dehydrogenase"/>
    <property type="match status" value="1"/>
</dbReference>
<dbReference type="FunFam" id="3.40.50.1980:FF:000026">
    <property type="entry name" value="Histidinol dehydrogenase"/>
    <property type="match status" value="1"/>
</dbReference>
<dbReference type="FunFam" id="1.20.5.1300:FF:000002">
    <property type="entry name" value="Histidinol dehydrogenase, chloroplastic"/>
    <property type="match status" value="1"/>
</dbReference>
<dbReference type="Gene3D" id="1.20.5.1300">
    <property type="match status" value="1"/>
</dbReference>
<dbReference type="Gene3D" id="3.40.50.1980">
    <property type="entry name" value="Nitrogenase molybdenum iron protein domain"/>
    <property type="match status" value="2"/>
</dbReference>
<dbReference type="HAMAP" id="MF_01024">
    <property type="entry name" value="HisD"/>
    <property type="match status" value="1"/>
</dbReference>
<dbReference type="InterPro" id="IPR016161">
    <property type="entry name" value="Ald_DH/histidinol_DH"/>
</dbReference>
<dbReference type="InterPro" id="IPR001692">
    <property type="entry name" value="Histidinol_DH_CS"/>
</dbReference>
<dbReference type="InterPro" id="IPR022695">
    <property type="entry name" value="Histidinol_DH_monofunct"/>
</dbReference>
<dbReference type="InterPro" id="IPR012131">
    <property type="entry name" value="Hstdl_DH"/>
</dbReference>
<dbReference type="NCBIfam" id="TIGR00069">
    <property type="entry name" value="hisD"/>
    <property type="match status" value="1"/>
</dbReference>
<dbReference type="PANTHER" id="PTHR21256:SF2">
    <property type="entry name" value="HISTIDINE BIOSYNTHESIS TRIFUNCTIONAL PROTEIN"/>
    <property type="match status" value="1"/>
</dbReference>
<dbReference type="PANTHER" id="PTHR21256">
    <property type="entry name" value="HISTIDINOL DEHYDROGENASE HDH"/>
    <property type="match status" value="1"/>
</dbReference>
<dbReference type="Pfam" id="PF00815">
    <property type="entry name" value="Histidinol_dh"/>
    <property type="match status" value="1"/>
</dbReference>
<dbReference type="PIRSF" id="PIRSF000099">
    <property type="entry name" value="Histidinol_dh"/>
    <property type="match status" value="1"/>
</dbReference>
<dbReference type="PRINTS" id="PR00083">
    <property type="entry name" value="HOLDHDRGNASE"/>
</dbReference>
<dbReference type="SUPFAM" id="SSF53720">
    <property type="entry name" value="ALDH-like"/>
    <property type="match status" value="1"/>
</dbReference>
<dbReference type="PROSITE" id="PS00611">
    <property type="entry name" value="HISOL_DEHYDROGENASE"/>
    <property type="match status" value="1"/>
</dbReference>
<keyword id="KW-0028">Amino-acid biosynthesis</keyword>
<keyword id="KW-0368">Histidine biosynthesis</keyword>
<keyword id="KW-0479">Metal-binding</keyword>
<keyword id="KW-0520">NAD</keyword>
<keyword id="KW-0560">Oxidoreductase</keyword>
<keyword id="KW-0862">Zinc</keyword>
<proteinExistence type="inferred from homology"/>
<reference key="1">
    <citation type="journal article" date="2001" name="Science">
        <title>Comparative genomics of Listeria species.</title>
        <authorList>
            <person name="Glaser P."/>
            <person name="Frangeul L."/>
            <person name="Buchrieser C."/>
            <person name="Rusniok C."/>
            <person name="Amend A."/>
            <person name="Baquero F."/>
            <person name="Berche P."/>
            <person name="Bloecker H."/>
            <person name="Brandt P."/>
            <person name="Chakraborty T."/>
            <person name="Charbit A."/>
            <person name="Chetouani F."/>
            <person name="Couve E."/>
            <person name="de Daruvar A."/>
            <person name="Dehoux P."/>
            <person name="Domann E."/>
            <person name="Dominguez-Bernal G."/>
            <person name="Duchaud E."/>
            <person name="Durant L."/>
            <person name="Dussurget O."/>
            <person name="Entian K.-D."/>
            <person name="Fsihi H."/>
            <person name="Garcia-del Portillo F."/>
            <person name="Garrido P."/>
            <person name="Gautier L."/>
            <person name="Goebel W."/>
            <person name="Gomez-Lopez N."/>
            <person name="Hain T."/>
            <person name="Hauf J."/>
            <person name="Jackson D."/>
            <person name="Jones L.-M."/>
            <person name="Kaerst U."/>
            <person name="Kreft J."/>
            <person name="Kuhn M."/>
            <person name="Kunst F."/>
            <person name="Kurapkat G."/>
            <person name="Madueno E."/>
            <person name="Maitournam A."/>
            <person name="Mata Vicente J."/>
            <person name="Ng E."/>
            <person name="Nedjari H."/>
            <person name="Nordsiek G."/>
            <person name="Novella S."/>
            <person name="de Pablos B."/>
            <person name="Perez-Diaz J.-C."/>
            <person name="Purcell R."/>
            <person name="Remmel B."/>
            <person name="Rose M."/>
            <person name="Schlueter T."/>
            <person name="Simoes N."/>
            <person name="Tierrez A."/>
            <person name="Vazquez-Boland J.-A."/>
            <person name="Voss H."/>
            <person name="Wehland J."/>
            <person name="Cossart P."/>
        </authorList>
    </citation>
    <scope>NUCLEOTIDE SEQUENCE [LARGE SCALE GENOMIC DNA]</scope>
    <source>
        <strain>ATCC BAA-680 / CLIP 11262</strain>
    </source>
</reference>